<evidence type="ECO:0000255" key="1">
    <source>
        <dbReference type="HAMAP-Rule" id="MF_00607"/>
    </source>
</evidence>
<feature type="chain" id="PRO_0000101496" description="Ribosomal RNA small subunit methyltransferase A">
    <location>
        <begin position="1"/>
        <end position="284"/>
    </location>
</feature>
<feature type="binding site" evidence="1">
    <location>
        <position position="28"/>
    </location>
    <ligand>
        <name>S-adenosyl-L-methionine</name>
        <dbReference type="ChEBI" id="CHEBI:59789"/>
    </ligand>
</feature>
<feature type="binding site" evidence="1">
    <location>
        <position position="30"/>
    </location>
    <ligand>
        <name>S-adenosyl-L-methionine</name>
        <dbReference type="ChEBI" id="CHEBI:59789"/>
    </ligand>
</feature>
<feature type="binding site" evidence="1">
    <location>
        <position position="55"/>
    </location>
    <ligand>
        <name>S-adenosyl-L-methionine</name>
        <dbReference type="ChEBI" id="CHEBI:59789"/>
    </ligand>
</feature>
<feature type="binding site" evidence="1">
    <location>
        <position position="77"/>
    </location>
    <ligand>
        <name>S-adenosyl-L-methionine</name>
        <dbReference type="ChEBI" id="CHEBI:59789"/>
    </ligand>
</feature>
<feature type="binding site" evidence="1">
    <location>
        <position position="103"/>
    </location>
    <ligand>
        <name>S-adenosyl-L-methionine</name>
        <dbReference type="ChEBI" id="CHEBI:59789"/>
    </ligand>
</feature>
<feature type="binding site" evidence="1">
    <location>
        <position position="123"/>
    </location>
    <ligand>
        <name>S-adenosyl-L-methionine</name>
        <dbReference type="ChEBI" id="CHEBI:59789"/>
    </ligand>
</feature>
<sequence>MSAIDDLPPLREVIRQHALSARKSLGQNFLLDLNLTARIARAAAPLDNSTIVEIGPGPGGLTRALLALGARRVVAIEHDERAIPALQDISARYPGRLEIVHGDAMTFDPRPLLNGESAKIVANLPYNIATQLLINWLTTEPWPPWYDMMVLMFQREVGERIVAREDEEAYGRLGVLANWRCETKILFDIAPSAFVPPPKVTSSVVRLVPRAEPLPCDRKMLEQVAAAAFGQRRKMLRQSLKSLGVDPARLAQAAGVDATRRAETIPISGFVAMARELADIRSEG</sequence>
<keyword id="KW-0963">Cytoplasm</keyword>
<keyword id="KW-0489">Methyltransferase</keyword>
<keyword id="KW-1185">Reference proteome</keyword>
<keyword id="KW-0694">RNA-binding</keyword>
<keyword id="KW-0698">rRNA processing</keyword>
<keyword id="KW-0949">S-adenosyl-L-methionine</keyword>
<keyword id="KW-0808">Transferase</keyword>
<comment type="function">
    <text evidence="1">Specifically dimethylates two adjacent adenosines (A1518 and A1519) in the loop of a conserved hairpin near the 3'-end of 16S rRNA in the 30S particle. May play a critical role in biogenesis of 30S subunits.</text>
</comment>
<comment type="catalytic activity">
    <reaction evidence="1">
        <text>adenosine(1518)/adenosine(1519) in 16S rRNA + 4 S-adenosyl-L-methionine = N(6)-dimethyladenosine(1518)/N(6)-dimethyladenosine(1519) in 16S rRNA + 4 S-adenosyl-L-homocysteine + 4 H(+)</text>
        <dbReference type="Rhea" id="RHEA:19609"/>
        <dbReference type="Rhea" id="RHEA-COMP:10232"/>
        <dbReference type="Rhea" id="RHEA-COMP:10233"/>
        <dbReference type="ChEBI" id="CHEBI:15378"/>
        <dbReference type="ChEBI" id="CHEBI:57856"/>
        <dbReference type="ChEBI" id="CHEBI:59789"/>
        <dbReference type="ChEBI" id="CHEBI:74411"/>
        <dbReference type="ChEBI" id="CHEBI:74493"/>
        <dbReference type="EC" id="2.1.1.182"/>
    </reaction>
</comment>
<comment type="subcellular location">
    <subcellularLocation>
        <location evidence="1">Cytoplasm</location>
    </subcellularLocation>
</comment>
<comment type="similarity">
    <text evidence="1">Belongs to the class I-like SAM-binding methyltransferase superfamily. rRNA adenine N(6)-methyltransferase family. RsmA subfamily.</text>
</comment>
<organism>
    <name type="scientific">Bradyrhizobium diazoefficiens (strain JCM 10833 / BCRC 13528 / IAM 13628 / NBRC 14792 / USDA 110)</name>
    <dbReference type="NCBI Taxonomy" id="224911"/>
    <lineage>
        <taxon>Bacteria</taxon>
        <taxon>Pseudomonadati</taxon>
        <taxon>Pseudomonadota</taxon>
        <taxon>Alphaproteobacteria</taxon>
        <taxon>Hyphomicrobiales</taxon>
        <taxon>Nitrobacteraceae</taxon>
        <taxon>Bradyrhizobium</taxon>
    </lineage>
</organism>
<accession>Q89MU0</accession>
<protein>
    <recommendedName>
        <fullName evidence="1">Ribosomal RNA small subunit methyltransferase A</fullName>
        <ecNumber evidence="1">2.1.1.182</ecNumber>
    </recommendedName>
    <alternativeName>
        <fullName evidence="1">16S rRNA (adenine(1518)-N(6)/adenine(1519)-N(6))-dimethyltransferase</fullName>
    </alternativeName>
    <alternativeName>
        <fullName evidence="1">16S rRNA dimethyladenosine transferase</fullName>
    </alternativeName>
    <alternativeName>
        <fullName evidence="1">16S rRNA dimethylase</fullName>
    </alternativeName>
    <alternativeName>
        <fullName evidence="1">S-adenosylmethionine-6-N', N'-adenosyl(rRNA) dimethyltransferase</fullName>
    </alternativeName>
</protein>
<name>RSMA_BRADU</name>
<dbReference type="EC" id="2.1.1.182" evidence="1"/>
<dbReference type="EMBL" id="BA000040">
    <property type="protein sequence ID" value="BAC49367.1"/>
    <property type="molecule type" value="Genomic_DNA"/>
</dbReference>
<dbReference type="RefSeq" id="NP_770742.1">
    <property type="nucleotide sequence ID" value="NC_004463.1"/>
</dbReference>
<dbReference type="RefSeq" id="WP_011086876.1">
    <property type="nucleotide sequence ID" value="NC_004463.1"/>
</dbReference>
<dbReference type="SMR" id="Q89MU0"/>
<dbReference type="FunCoup" id="Q89MU0">
    <property type="interactions" value="631"/>
</dbReference>
<dbReference type="STRING" id="224911.AAV28_17540"/>
<dbReference type="EnsemblBacteria" id="BAC49367">
    <property type="protein sequence ID" value="BAC49367"/>
    <property type="gene ID" value="BAC49367"/>
</dbReference>
<dbReference type="GeneID" id="46491101"/>
<dbReference type="KEGG" id="bja:bll4102"/>
<dbReference type="PATRIC" id="fig|224911.44.peg.3812"/>
<dbReference type="eggNOG" id="COG0030">
    <property type="taxonomic scope" value="Bacteria"/>
</dbReference>
<dbReference type="HOGENOM" id="CLU_041220_0_1_5"/>
<dbReference type="InParanoid" id="Q89MU0"/>
<dbReference type="OrthoDB" id="9814755at2"/>
<dbReference type="PhylomeDB" id="Q89MU0"/>
<dbReference type="Proteomes" id="UP000002526">
    <property type="component" value="Chromosome"/>
</dbReference>
<dbReference type="GO" id="GO:0005829">
    <property type="term" value="C:cytosol"/>
    <property type="evidence" value="ECO:0000318"/>
    <property type="project" value="GO_Central"/>
</dbReference>
<dbReference type="GO" id="GO:0052908">
    <property type="term" value="F:16S rRNA (adenine(1518)-N(6)/adenine(1519)-N(6))-dimethyltransferase activity"/>
    <property type="evidence" value="ECO:0007669"/>
    <property type="project" value="UniProtKB-EC"/>
</dbReference>
<dbReference type="GO" id="GO:0003723">
    <property type="term" value="F:RNA binding"/>
    <property type="evidence" value="ECO:0007669"/>
    <property type="project" value="UniProtKB-KW"/>
</dbReference>
<dbReference type="GO" id="GO:0000179">
    <property type="term" value="F:rRNA (adenine-N6,N6-)-dimethyltransferase activity"/>
    <property type="evidence" value="ECO:0000318"/>
    <property type="project" value="GO_Central"/>
</dbReference>
<dbReference type="GO" id="GO:0031167">
    <property type="term" value="P:rRNA methylation"/>
    <property type="evidence" value="ECO:0000318"/>
    <property type="project" value="GO_Central"/>
</dbReference>
<dbReference type="CDD" id="cd02440">
    <property type="entry name" value="AdoMet_MTases"/>
    <property type="match status" value="1"/>
</dbReference>
<dbReference type="FunFam" id="3.40.50.150:FF:000023">
    <property type="entry name" value="Ribosomal RNA small subunit methyltransferase A"/>
    <property type="match status" value="1"/>
</dbReference>
<dbReference type="Gene3D" id="1.10.8.100">
    <property type="entry name" value="Ribosomal RNA adenine dimethylase-like, domain 2"/>
    <property type="match status" value="1"/>
</dbReference>
<dbReference type="Gene3D" id="3.40.50.150">
    <property type="entry name" value="Vaccinia Virus protein VP39"/>
    <property type="match status" value="1"/>
</dbReference>
<dbReference type="HAMAP" id="MF_00607">
    <property type="entry name" value="16SrRNA_methyltr_A"/>
    <property type="match status" value="1"/>
</dbReference>
<dbReference type="InterPro" id="IPR001737">
    <property type="entry name" value="KsgA/Erm"/>
</dbReference>
<dbReference type="InterPro" id="IPR023165">
    <property type="entry name" value="rRNA_Ade_diMease-like_C"/>
</dbReference>
<dbReference type="InterPro" id="IPR020596">
    <property type="entry name" value="rRNA_Ade_Mease_Trfase_CS"/>
</dbReference>
<dbReference type="InterPro" id="IPR020598">
    <property type="entry name" value="rRNA_Ade_methylase_Trfase_N"/>
</dbReference>
<dbReference type="InterPro" id="IPR011530">
    <property type="entry name" value="rRNA_adenine_dimethylase"/>
</dbReference>
<dbReference type="InterPro" id="IPR029063">
    <property type="entry name" value="SAM-dependent_MTases_sf"/>
</dbReference>
<dbReference type="NCBIfam" id="TIGR00755">
    <property type="entry name" value="ksgA"/>
    <property type="match status" value="1"/>
</dbReference>
<dbReference type="PANTHER" id="PTHR11727">
    <property type="entry name" value="DIMETHYLADENOSINE TRANSFERASE"/>
    <property type="match status" value="1"/>
</dbReference>
<dbReference type="PANTHER" id="PTHR11727:SF7">
    <property type="entry name" value="DIMETHYLADENOSINE TRANSFERASE-RELATED"/>
    <property type="match status" value="1"/>
</dbReference>
<dbReference type="Pfam" id="PF00398">
    <property type="entry name" value="RrnaAD"/>
    <property type="match status" value="1"/>
</dbReference>
<dbReference type="SMART" id="SM00650">
    <property type="entry name" value="rADc"/>
    <property type="match status" value="1"/>
</dbReference>
<dbReference type="SUPFAM" id="SSF53335">
    <property type="entry name" value="S-adenosyl-L-methionine-dependent methyltransferases"/>
    <property type="match status" value="1"/>
</dbReference>
<dbReference type="PROSITE" id="PS01131">
    <property type="entry name" value="RRNA_A_DIMETH"/>
    <property type="match status" value="1"/>
</dbReference>
<dbReference type="PROSITE" id="PS51689">
    <property type="entry name" value="SAM_RNA_A_N6_MT"/>
    <property type="match status" value="1"/>
</dbReference>
<proteinExistence type="inferred from homology"/>
<gene>
    <name evidence="1" type="primary">rsmA</name>
    <name evidence="1" type="synonym">ksgA</name>
    <name type="ordered locus">bll4102</name>
</gene>
<reference key="1">
    <citation type="journal article" date="2002" name="DNA Res.">
        <title>Complete genomic sequence of nitrogen-fixing symbiotic bacterium Bradyrhizobium japonicum USDA110.</title>
        <authorList>
            <person name="Kaneko T."/>
            <person name="Nakamura Y."/>
            <person name="Sato S."/>
            <person name="Minamisawa K."/>
            <person name="Uchiumi T."/>
            <person name="Sasamoto S."/>
            <person name="Watanabe A."/>
            <person name="Idesawa K."/>
            <person name="Iriguchi M."/>
            <person name="Kawashima K."/>
            <person name="Kohara M."/>
            <person name="Matsumoto M."/>
            <person name="Shimpo S."/>
            <person name="Tsuruoka H."/>
            <person name="Wada T."/>
            <person name="Yamada M."/>
            <person name="Tabata S."/>
        </authorList>
    </citation>
    <scope>NUCLEOTIDE SEQUENCE [LARGE SCALE GENOMIC DNA]</scope>
    <source>
        <strain>JCM 10833 / BCRC 13528 / IAM 13628 / NBRC 14792 / USDA 110</strain>
    </source>
</reference>